<evidence type="ECO:0000255" key="1">
    <source>
        <dbReference type="HAMAP-Rule" id="MF_00572"/>
    </source>
</evidence>
<protein>
    <recommendedName>
        <fullName evidence="1">2-isopropylmalate synthase</fullName>
        <ecNumber evidence="1">2.3.3.13</ecNumber>
    </recommendedName>
    <alternativeName>
        <fullName evidence="1">Alpha-IPM synthase</fullName>
    </alternativeName>
    <alternativeName>
        <fullName evidence="1">Alpha-isopropylmalate synthase</fullName>
    </alternativeName>
</protein>
<accession>A1R6V4</accession>
<proteinExistence type="inferred from homology"/>
<reference key="1">
    <citation type="journal article" date="2006" name="PLoS Genet.">
        <title>Secrets of soil survival revealed by the genome sequence of Arthrobacter aurescens TC1.</title>
        <authorList>
            <person name="Mongodin E.F."/>
            <person name="Shapir N."/>
            <person name="Daugherty S.C."/>
            <person name="DeBoy R.T."/>
            <person name="Emerson J.B."/>
            <person name="Shvartzbeyn A."/>
            <person name="Radune D."/>
            <person name="Vamathevan J."/>
            <person name="Riggs F."/>
            <person name="Grinberg V."/>
            <person name="Khouri H.M."/>
            <person name="Wackett L.P."/>
            <person name="Nelson K.E."/>
            <person name="Sadowsky M.J."/>
        </authorList>
    </citation>
    <scope>NUCLEOTIDE SEQUENCE [LARGE SCALE GENOMIC DNA]</scope>
    <source>
        <strain>TC1</strain>
    </source>
</reference>
<sequence>MRNAQKPSGMPIHRYLPFQDQITVEVPDRTWPDKVITKAPRWCAVDLRDGNQALIDPMSPARKLKMFQLLVKMGYKEIEVGFPSASQTDFDFVRQLIEGGHIPDDVSIQVLTQAREHLIERTYESLVGAKQAIVHLYNSTSVLQRRVVFNQDEDGILDIALQGARLCKKYEETLTDTHITYEYSPESFTGTELEYAARVCNAIADVFEASADKQVIINLPATVEMATPNVYADSIEWMHRNLHPREGIIISLHPHNDRGTGVAAAELGYLAGADRIEGCLFGNGERTGNVDLVTLGLNMFVQGVDPMIDFSDIDEIRRTVEYCNQLPVPERSPYGGDLVFTAFSGSHQDAIKKGFEALEKDAAAAGKSVDDFTWQVPYLPIDPKDLGRSYEAVIRVNSQSGKGGVAYLLKNEHNLDLPRRAQIEFSGVIQRRTDAVGGEVSGAQLWQIFQDEYLPSDEEQAQWGRYGLGSVSTETDESGAMTMNANLRIDGVEVRRTGHGNGPIAALLDILHHDGVDVRVLDYSEHALSEGGSASAAAYVECAVGERVLWGVGIDPSTTTSSLKALISAVNRAVRDAQA</sequence>
<organism>
    <name type="scientific">Paenarthrobacter aurescens (strain TC1)</name>
    <dbReference type="NCBI Taxonomy" id="290340"/>
    <lineage>
        <taxon>Bacteria</taxon>
        <taxon>Bacillati</taxon>
        <taxon>Actinomycetota</taxon>
        <taxon>Actinomycetes</taxon>
        <taxon>Micrococcales</taxon>
        <taxon>Micrococcaceae</taxon>
        <taxon>Paenarthrobacter</taxon>
    </lineage>
</organism>
<keyword id="KW-0028">Amino-acid biosynthesis</keyword>
<keyword id="KW-0100">Branched-chain amino acid biosynthesis</keyword>
<keyword id="KW-0963">Cytoplasm</keyword>
<keyword id="KW-0432">Leucine biosynthesis</keyword>
<keyword id="KW-0460">Magnesium</keyword>
<keyword id="KW-0479">Metal-binding</keyword>
<keyword id="KW-0808">Transferase</keyword>
<comment type="function">
    <text evidence="1">Catalyzes the condensation of the acetyl group of acetyl-CoA with 3-methyl-2-oxobutanoate (2-ketoisovalerate) to form 3-carboxy-3-hydroxy-4-methylpentanoate (2-isopropylmalate).</text>
</comment>
<comment type="catalytic activity">
    <reaction evidence="1">
        <text>3-methyl-2-oxobutanoate + acetyl-CoA + H2O = (2S)-2-isopropylmalate + CoA + H(+)</text>
        <dbReference type="Rhea" id="RHEA:21524"/>
        <dbReference type="ChEBI" id="CHEBI:1178"/>
        <dbReference type="ChEBI" id="CHEBI:11851"/>
        <dbReference type="ChEBI" id="CHEBI:15377"/>
        <dbReference type="ChEBI" id="CHEBI:15378"/>
        <dbReference type="ChEBI" id="CHEBI:57287"/>
        <dbReference type="ChEBI" id="CHEBI:57288"/>
        <dbReference type="EC" id="2.3.3.13"/>
    </reaction>
</comment>
<comment type="cofactor">
    <cofactor evidence="1">
        <name>Mg(2+)</name>
        <dbReference type="ChEBI" id="CHEBI:18420"/>
    </cofactor>
</comment>
<comment type="pathway">
    <text evidence="1">Amino-acid biosynthesis; L-leucine biosynthesis; L-leucine from 3-methyl-2-oxobutanoate: step 1/4.</text>
</comment>
<comment type="subunit">
    <text evidence="1">Homodimer.</text>
</comment>
<comment type="subcellular location">
    <subcellularLocation>
        <location evidence="1">Cytoplasm</location>
    </subcellularLocation>
</comment>
<comment type="similarity">
    <text evidence="1">Belongs to the alpha-IPM synthase/homocitrate synthase family. LeuA type 2 subfamily.</text>
</comment>
<gene>
    <name evidence="1" type="primary">leuA</name>
    <name type="ordered locus">AAur_2225</name>
</gene>
<name>LEU1_PAEAT</name>
<dbReference type="EC" id="2.3.3.13" evidence="1"/>
<dbReference type="EMBL" id="CP000474">
    <property type="protein sequence ID" value="ABM07936.1"/>
    <property type="molecule type" value="Genomic_DNA"/>
</dbReference>
<dbReference type="RefSeq" id="WP_011774910.1">
    <property type="nucleotide sequence ID" value="NC_008711.1"/>
</dbReference>
<dbReference type="SMR" id="A1R6V4"/>
<dbReference type="STRING" id="290340.AAur_2225"/>
<dbReference type="GeneID" id="97301089"/>
<dbReference type="KEGG" id="aau:AAur_2225"/>
<dbReference type="eggNOG" id="COG0119">
    <property type="taxonomic scope" value="Bacteria"/>
</dbReference>
<dbReference type="HOGENOM" id="CLU_004588_3_0_11"/>
<dbReference type="OrthoDB" id="9803573at2"/>
<dbReference type="UniPathway" id="UPA00048">
    <property type="reaction ID" value="UER00070"/>
</dbReference>
<dbReference type="Proteomes" id="UP000000637">
    <property type="component" value="Chromosome"/>
</dbReference>
<dbReference type="GO" id="GO:0005737">
    <property type="term" value="C:cytoplasm"/>
    <property type="evidence" value="ECO:0007669"/>
    <property type="project" value="UniProtKB-SubCell"/>
</dbReference>
<dbReference type="GO" id="GO:0003852">
    <property type="term" value="F:2-isopropylmalate synthase activity"/>
    <property type="evidence" value="ECO:0007669"/>
    <property type="project" value="UniProtKB-UniRule"/>
</dbReference>
<dbReference type="GO" id="GO:0003985">
    <property type="term" value="F:acetyl-CoA C-acetyltransferase activity"/>
    <property type="evidence" value="ECO:0007669"/>
    <property type="project" value="UniProtKB-UniRule"/>
</dbReference>
<dbReference type="GO" id="GO:0000287">
    <property type="term" value="F:magnesium ion binding"/>
    <property type="evidence" value="ECO:0007669"/>
    <property type="project" value="UniProtKB-UniRule"/>
</dbReference>
<dbReference type="GO" id="GO:0009098">
    <property type="term" value="P:L-leucine biosynthetic process"/>
    <property type="evidence" value="ECO:0007669"/>
    <property type="project" value="UniProtKB-UniRule"/>
</dbReference>
<dbReference type="CDD" id="cd07942">
    <property type="entry name" value="DRE_TIM_LeuA"/>
    <property type="match status" value="1"/>
</dbReference>
<dbReference type="FunFam" id="3.20.20.70:FF:000045">
    <property type="entry name" value="2-isopropylmalate synthase"/>
    <property type="match status" value="1"/>
</dbReference>
<dbReference type="FunFam" id="3.30.160.270:FF:000006">
    <property type="entry name" value="2-isopropylmalate synthase"/>
    <property type="match status" value="1"/>
</dbReference>
<dbReference type="Gene3D" id="3.30.160.270">
    <property type="match status" value="1"/>
</dbReference>
<dbReference type="Gene3D" id="3.20.20.70">
    <property type="entry name" value="Aldolase class I"/>
    <property type="match status" value="1"/>
</dbReference>
<dbReference type="HAMAP" id="MF_00572">
    <property type="entry name" value="LeuA_type2"/>
    <property type="match status" value="1"/>
</dbReference>
<dbReference type="InterPro" id="IPR013709">
    <property type="entry name" value="2-isopropylmalate_synth_dimer"/>
</dbReference>
<dbReference type="InterPro" id="IPR002034">
    <property type="entry name" value="AIPM/Hcit_synth_CS"/>
</dbReference>
<dbReference type="InterPro" id="IPR013785">
    <property type="entry name" value="Aldolase_TIM"/>
</dbReference>
<dbReference type="InterPro" id="IPR005668">
    <property type="entry name" value="IPM_Synthase"/>
</dbReference>
<dbReference type="InterPro" id="IPR054692">
    <property type="entry name" value="LeuA-like_post-cat"/>
</dbReference>
<dbReference type="InterPro" id="IPR036230">
    <property type="entry name" value="LeuA_allosteric_dom_sf"/>
</dbReference>
<dbReference type="InterPro" id="IPR039371">
    <property type="entry name" value="LeuA_N_DRE-TIM"/>
</dbReference>
<dbReference type="InterPro" id="IPR000891">
    <property type="entry name" value="PYR_CT"/>
</dbReference>
<dbReference type="NCBIfam" id="TIGR00970">
    <property type="entry name" value="leuA_yeast"/>
    <property type="match status" value="1"/>
</dbReference>
<dbReference type="NCBIfam" id="NF002991">
    <property type="entry name" value="PRK03739.1"/>
    <property type="match status" value="1"/>
</dbReference>
<dbReference type="PANTHER" id="PTHR46911">
    <property type="match status" value="1"/>
</dbReference>
<dbReference type="PANTHER" id="PTHR46911:SF1">
    <property type="entry name" value="2-ISOPROPYLMALATE SYNTHASE"/>
    <property type="match status" value="1"/>
</dbReference>
<dbReference type="Pfam" id="PF00682">
    <property type="entry name" value="HMGL-like"/>
    <property type="match status" value="1"/>
</dbReference>
<dbReference type="Pfam" id="PF22615">
    <property type="entry name" value="IPMS_D2"/>
    <property type="match status" value="1"/>
</dbReference>
<dbReference type="Pfam" id="PF08502">
    <property type="entry name" value="LeuA_dimer"/>
    <property type="match status" value="1"/>
</dbReference>
<dbReference type="SMART" id="SM00917">
    <property type="entry name" value="LeuA_dimer"/>
    <property type="match status" value="1"/>
</dbReference>
<dbReference type="SUPFAM" id="SSF110921">
    <property type="entry name" value="2-isopropylmalate synthase LeuA, allosteric (dimerisation) domain"/>
    <property type="match status" value="1"/>
</dbReference>
<dbReference type="SUPFAM" id="SSF51569">
    <property type="entry name" value="Aldolase"/>
    <property type="match status" value="1"/>
</dbReference>
<dbReference type="SUPFAM" id="SSF89000">
    <property type="entry name" value="post-HMGL domain-like"/>
    <property type="match status" value="1"/>
</dbReference>
<dbReference type="PROSITE" id="PS00815">
    <property type="entry name" value="AIPM_HOMOCIT_SYNTH_1"/>
    <property type="match status" value="1"/>
</dbReference>
<dbReference type="PROSITE" id="PS00816">
    <property type="entry name" value="AIPM_HOMOCIT_SYNTH_2"/>
    <property type="match status" value="1"/>
</dbReference>
<dbReference type="PROSITE" id="PS50991">
    <property type="entry name" value="PYR_CT"/>
    <property type="match status" value="1"/>
</dbReference>
<feature type="chain" id="PRO_1000129497" description="2-isopropylmalate synthase">
    <location>
        <begin position="1"/>
        <end position="579"/>
    </location>
</feature>
<feature type="domain" description="Pyruvate carboxyltransferase" evidence="1">
    <location>
        <begin position="40"/>
        <end position="314"/>
    </location>
</feature>
<feature type="region of interest" description="Regulatory domain" evidence="1">
    <location>
        <begin position="456"/>
        <end position="579"/>
    </location>
</feature>
<feature type="binding site" evidence="1">
    <location>
        <position position="49"/>
    </location>
    <ligand>
        <name>Mg(2+)</name>
        <dbReference type="ChEBI" id="CHEBI:18420"/>
    </ligand>
</feature>
<feature type="binding site" evidence="1">
    <location>
        <position position="253"/>
    </location>
    <ligand>
        <name>Mg(2+)</name>
        <dbReference type="ChEBI" id="CHEBI:18420"/>
    </ligand>
</feature>
<feature type="binding site" evidence="1">
    <location>
        <position position="255"/>
    </location>
    <ligand>
        <name>Mg(2+)</name>
        <dbReference type="ChEBI" id="CHEBI:18420"/>
    </ligand>
</feature>
<feature type="binding site" evidence="1">
    <location>
        <position position="289"/>
    </location>
    <ligand>
        <name>Mg(2+)</name>
        <dbReference type="ChEBI" id="CHEBI:18420"/>
    </ligand>
</feature>